<evidence type="ECO:0000250" key="1">
    <source>
        <dbReference type="UniProtKB" id="Q02899"/>
    </source>
</evidence>
<evidence type="ECO:0000269" key="2">
    <source>
    </source>
</evidence>
<evidence type="ECO:0000269" key="3">
    <source>
    </source>
</evidence>
<evidence type="ECO:0000269" key="4">
    <source>
    </source>
</evidence>
<evidence type="ECO:0000269" key="5">
    <source ref="10"/>
</evidence>
<evidence type="ECO:0000269" key="6">
    <source ref="9"/>
</evidence>
<evidence type="ECO:0000303" key="7">
    <source>
    </source>
</evidence>
<evidence type="ECO:0000305" key="8"/>
<evidence type="ECO:0000305" key="9">
    <source>
    </source>
</evidence>
<evidence type="ECO:0000305" key="10">
    <source>
    </source>
</evidence>
<evidence type="ECO:0007744" key="11">
    <source>
        <dbReference type="PDB" id="5V4P"/>
    </source>
</evidence>
<evidence type="ECO:0007744" key="12">
    <source>
        <dbReference type="PDB" id="5V4V"/>
    </source>
</evidence>
<evidence type="ECO:0007829" key="13">
    <source>
        <dbReference type="PDB" id="5V4V"/>
    </source>
</evidence>
<proteinExistence type="evidence at protein level"/>
<comment type="function">
    <text evidence="1 2">Flavin-dependent enoate reductase that catalyzes the chemo- and stereoslective hydrogenation of electron-poor alkenes. The enzyme is reduced by NADPH, and oxygen, quinones, and alpha,beta-unsaturated aldehydes and ketones can act as electron acceptors to complete catalytic turnover. The physiological oxidant remains elusive (By similarity). Has a prooxidant activity, increasing reactive oxygen species (ROS) levels when overexpressed. Formation of OYE2-OYE3 heterodimers contribute to the induction of programmed cell death upon oxidative stress (PubMed:17897954).</text>
</comment>
<comment type="catalytic activity">
    <reaction evidence="3">
        <text>A + NADPH + H(+) = AH2 + NADP(+)</text>
        <dbReference type="Rhea" id="RHEA:13149"/>
        <dbReference type="ChEBI" id="CHEBI:13193"/>
        <dbReference type="ChEBI" id="CHEBI:15378"/>
        <dbReference type="ChEBI" id="CHEBI:17499"/>
        <dbReference type="ChEBI" id="CHEBI:57783"/>
        <dbReference type="ChEBI" id="CHEBI:58349"/>
        <dbReference type="EC" id="1.6.99.1"/>
    </reaction>
</comment>
<comment type="cofactor">
    <cofactor evidence="10">
        <name>FMN</name>
        <dbReference type="ChEBI" id="CHEBI:58210"/>
    </cofactor>
</comment>
<comment type="biophysicochemical properties">
    <kinetics>
        <KM evidence="3">0.14 mM for cyclohexenone</KM>
        <KM evidence="3">5.8 uM for NADPH</KM>
    </kinetics>
</comment>
<comment type="subunit">
    <text evidence="4">Homodimer or heterodimer with OYE2.</text>
</comment>
<comment type="interaction">
    <interactant intactId="EBI-12734">
        <id>P41816</id>
    </interactant>
    <interactant intactId="EBI-12729">
        <id>Q03558</id>
        <label>OYE2</label>
    </interactant>
    <organismsDiffer>false</organismsDiffer>
    <experiments>3</experiments>
</comment>
<comment type="mass spectrometry"/>
<comment type="similarity">
    <text evidence="8">Belongs to the NADH:flavin oxidoreductase/NADH oxidase family.</text>
</comment>
<reference key="1">
    <citation type="journal article" date="1995" name="J. Biol. Chem.">
        <title>A new old yellow enzyme of Saccharomyces cerevisiae.</title>
        <authorList>
            <person name="Niino Y.S."/>
            <person name="Chakraborty S."/>
            <person name="Brown B.J."/>
            <person name="Massey V."/>
        </authorList>
    </citation>
    <scope>NUCLEOTIDE SEQUENCE [GENOMIC DNA]</scope>
    <scope>CATALYTIC ACTIVITY</scope>
    <scope>MASS SPECTROMETRY</scope>
    <source>
        <strain>RZ49-1</strain>
    </source>
</reference>
<reference key="2">
    <citation type="journal article" date="1997" name="Nature">
        <title>The nucleotide sequence of Saccharomyces cerevisiae chromosome XVI.</title>
        <authorList>
            <person name="Bussey H."/>
            <person name="Storms R.K."/>
            <person name="Ahmed A."/>
            <person name="Albermann K."/>
            <person name="Allen E."/>
            <person name="Ansorge W."/>
            <person name="Araujo R."/>
            <person name="Aparicio A."/>
            <person name="Barrell B.G."/>
            <person name="Badcock K."/>
            <person name="Benes V."/>
            <person name="Botstein D."/>
            <person name="Bowman S."/>
            <person name="Brueckner M."/>
            <person name="Carpenter J."/>
            <person name="Cherry J.M."/>
            <person name="Chung E."/>
            <person name="Churcher C.M."/>
            <person name="Coster F."/>
            <person name="Davis K."/>
            <person name="Davis R.W."/>
            <person name="Dietrich F.S."/>
            <person name="Delius H."/>
            <person name="DiPaolo T."/>
            <person name="Dubois E."/>
            <person name="Duesterhoeft A."/>
            <person name="Duncan M."/>
            <person name="Floeth M."/>
            <person name="Fortin N."/>
            <person name="Friesen J.D."/>
            <person name="Fritz C."/>
            <person name="Goffeau A."/>
            <person name="Hall J."/>
            <person name="Hebling U."/>
            <person name="Heumann K."/>
            <person name="Hilbert H."/>
            <person name="Hillier L.W."/>
            <person name="Hunicke-Smith S."/>
            <person name="Hyman R.W."/>
            <person name="Johnston M."/>
            <person name="Kalman S."/>
            <person name="Kleine K."/>
            <person name="Komp C."/>
            <person name="Kurdi O."/>
            <person name="Lashkari D."/>
            <person name="Lew H."/>
            <person name="Lin A."/>
            <person name="Lin D."/>
            <person name="Louis E.J."/>
            <person name="Marathe R."/>
            <person name="Messenguy F."/>
            <person name="Mewes H.-W."/>
            <person name="Mirtipati S."/>
            <person name="Moestl D."/>
            <person name="Mueller-Auer S."/>
            <person name="Namath A."/>
            <person name="Nentwich U."/>
            <person name="Oefner P."/>
            <person name="Pearson D."/>
            <person name="Petel F.X."/>
            <person name="Pohl T.M."/>
            <person name="Purnelle B."/>
            <person name="Rajandream M.A."/>
            <person name="Rechmann S."/>
            <person name="Rieger M."/>
            <person name="Riles L."/>
            <person name="Roberts D."/>
            <person name="Schaefer M."/>
            <person name="Scharfe M."/>
            <person name="Scherens B."/>
            <person name="Schramm S."/>
            <person name="Schroeder M."/>
            <person name="Sdicu A.-M."/>
            <person name="Tettelin H."/>
            <person name="Urrestarazu L.A."/>
            <person name="Ushinsky S."/>
            <person name="Vierendeels F."/>
            <person name="Vissers S."/>
            <person name="Voss H."/>
            <person name="Walsh S.V."/>
            <person name="Wambutt R."/>
            <person name="Wang Y."/>
            <person name="Wedler E."/>
            <person name="Wedler H."/>
            <person name="Winnett E."/>
            <person name="Zhong W.-W."/>
            <person name="Zollner A."/>
            <person name="Vo D.H."/>
            <person name="Hani J."/>
        </authorList>
    </citation>
    <scope>NUCLEOTIDE SEQUENCE [LARGE SCALE GENOMIC DNA]</scope>
    <source>
        <strain>ATCC 204508 / S288c</strain>
    </source>
</reference>
<reference key="3">
    <citation type="journal article" date="2014" name="G3 (Bethesda)">
        <title>The reference genome sequence of Saccharomyces cerevisiae: Then and now.</title>
        <authorList>
            <person name="Engel S.R."/>
            <person name="Dietrich F.S."/>
            <person name="Fisk D.G."/>
            <person name="Binkley G."/>
            <person name="Balakrishnan R."/>
            <person name="Costanzo M.C."/>
            <person name="Dwight S.S."/>
            <person name="Hitz B.C."/>
            <person name="Karra K."/>
            <person name="Nash R.S."/>
            <person name="Weng S."/>
            <person name="Wong E.D."/>
            <person name="Lloyd P."/>
            <person name="Skrzypek M.S."/>
            <person name="Miyasato S.R."/>
            <person name="Simison M."/>
            <person name="Cherry J.M."/>
        </authorList>
    </citation>
    <scope>GENOME REANNOTATION</scope>
    <source>
        <strain>ATCC 204508 / S288c</strain>
    </source>
</reference>
<reference key="4">
    <citation type="journal article" date="2007" name="Genome Res.">
        <title>Approaching a complete repository of sequence-verified protein-encoding clones for Saccharomyces cerevisiae.</title>
        <authorList>
            <person name="Hu Y."/>
            <person name="Rolfs A."/>
            <person name="Bhullar B."/>
            <person name="Murthy T.V.S."/>
            <person name="Zhu C."/>
            <person name="Berger M.F."/>
            <person name="Camargo A.A."/>
            <person name="Kelley F."/>
            <person name="McCarron S."/>
            <person name="Jepson D."/>
            <person name="Richardson A."/>
            <person name="Raphael J."/>
            <person name="Moreira D."/>
            <person name="Taycher E."/>
            <person name="Zuo D."/>
            <person name="Mohr S."/>
            <person name="Kane M.F."/>
            <person name="Williamson J."/>
            <person name="Simpson A.J.G."/>
            <person name="Bulyk M.L."/>
            <person name="Harlow E."/>
            <person name="Marsischky G."/>
            <person name="Kolodner R.D."/>
            <person name="LaBaer J."/>
        </authorList>
    </citation>
    <scope>NUCLEOTIDE SEQUENCE [GENOMIC DNA]</scope>
    <source>
        <strain>ATCC 204508 / S288c</strain>
    </source>
</reference>
<reference key="5">
    <citation type="journal article" date="1996" name="Yeast">
        <title>The sequence of 55 kb on the left arm of yeast chromosome XVI identifies a small nuclear RNA, a new putative protein kinase and two new putative regulators.</title>
        <authorList>
            <person name="Purnelle B."/>
            <person name="Coster F."/>
            <person name="Goffeau A."/>
        </authorList>
    </citation>
    <scope>NUCLEOTIDE SEQUENCE [GENOMIC DNA] OF 1-181</scope>
    <source>
        <strain>ATCC 204511 / S288c / AB972</strain>
    </source>
</reference>
<reference key="6">
    <citation type="journal article" date="1993" name="J. Biol. Chem.">
        <title>Old Yellow Enzyme. The discovery of multiple isozymes and a family of related proteins.</title>
        <authorList>
            <person name="Stott K."/>
            <person name="Saito K."/>
            <person name="Thiels D.J."/>
            <person name="Massey V."/>
        </authorList>
    </citation>
    <scope>PROTEIN SEQUENCE OF 2-31</scope>
    <scope>CLEAVAGE OF INITIATOR METHIONINE</scope>
    <scope>SUBUNIT</scope>
    <scope>COFACTOR</scope>
    <source>
        <strain>RZ49-1</strain>
    </source>
</reference>
<reference key="7">
    <citation type="book" date="1994" name="Flavin and Flavoproteins 1993">
        <editorList>
            <person name="Yagi K."/>
        </editorList>
        <authorList>
            <person name="Brown B.J."/>
            <person name="Massey V."/>
        </authorList>
    </citation>
    <scope>PARTIAL PROTEIN SEQUENCE</scope>
</reference>
<reference key="8">
    <citation type="journal article" date="2007" name="J. Biol. Chem.">
        <title>Old yellow enzymes, highly homologous FMN oxidoreductases with modulating roles in oxidative stress and programmed cell death in yeast.</title>
        <authorList>
            <person name="Odat O."/>
            <person name="Matta S."/>
            <person name="Khalil H."/>
            <person name="Kampranis S.C."/>
            <person name="Pfau R."/>
            <person name="Tsichlis P.N."/>
            <person name="Makris A.M."/>
        </authorList>
    </citation>
    <scope>FUNCTION</scope>
</reference>
<reference evidence="11" key="9">
    <citation type="submission" date="2017-03" db="PDB data bank">
        <title>Saccharomyces cerevisiae OYE 3 soaked with p-hydroxybenzaldehyde.</title>
        <authorList>
            <person name="Stewart J."/>
            <person name="Powell R.W. III"/>
        </authorList>
    </citation>
    <scope>X-RAY CRYSTALLOGRAPHY (1.88 ANGSTROMS) IN COMPLEX WITH FMN AND SUBSTRATE ANALOG</scope>
</reference>
<reference evidence="12" key="10">
    <citation type="submission" date="2017-03" db="PDB data bank">
        <title>Saccharomyces cerevisiae old yellow enzyme 3.</title>
        <authorList>
            <person name="Stewart J.D."/>
        </authorList>
    </citation>
    <scope>X-RAY CRYSTALLOGRAPHY (1.80 ANGSTROMS) IN COMPLEX WITH FMN</scope>
</reference>
<dbReference type="EC" id="1.6.99.1" evidence="3"/>
<dbReference type="EMBL" id="L29279">
    <property type="protein sequence ID" value="AAA64522.1"/>
    <property type="molecule type" value="Genomic_DNA"/>
</dbReference>
<dbReference type="EMBL" id="Z73526">
    <property type="protein sequence ID" value="CAA97877.1"/>
    <property type="molecule type" value="Genomic_DNA"/>
</dbReference>
<dbReference type="EMBL" id="Z73527">
    <property type="protein sequence ID" value="CAA97878.1"/>
    <property type="molecule type" value="Genomic_DNA"/>
</dbReference>
<dbReference type="EMBL" id="AY693226">
    <property type="protein sequence ID" value="AAT93245.1"/>
    <property type="molecule type" value="Genomic_DNA"/>
</dbReference>
<dbReference type="EMBL" id="X96770">
    <property type="protein sequence ID" value="CAA65573.1"/>
    <property type="molecule type" value="Genomic_DNA"/>
</dbReference>
<dbReference type="EMBL" id="BK006949">
    <property type="protein sequence ID" value="DAA11263.1"/>
    <property type="molecule type" value="Genomic_DNA"/>
</dbReference>
<dbReference type="PIR" id="A55569">
    <property type="entry name" value="A55569"/>
</dbReference>
<dbReference type="RefSeq" id="NP_015154.1">
    <property type="nucleotide sequence ID" value="NM_001183985.1"/>
</dbReference>
<dbReference type="PDB" id="5V4P">
    <property type="method" value="X-ray"/>
    <property type="resolution" value="1.88 A"/>
    <property type="chains" value="A/B=2-400"/>
</dbReference>
<dbReference type="PDB" id="5V4V">
    <property type="method" value="X-ray"/>
    <property type="resolution" value="1.80 A"/>
    <property type="chains" value="A/B=2-400"/>
</dbReference>
<dbReference type="PDBsum" id="5V4P"/>
<dbReference type="PDBsum" id="5V4V"/>
<dbReference type="SMR" id="P41816"/>
<dbReference type="BioGRID" id="36012">
    <property type="interactions" value="111"/>
</dbReference>
<dbReference type="DIP" id="DIP-6338N"/>
<dbReference type="FunCoup" id="P41816">
    <property type="interactions" value="771"/>
</dbReference>
<dbReference type="IntAct" id="P41816">
    <property type="interactions" value="7"/>
</dbReference>
<dbReference type="STRING" id="4932.YPL171C"/>
<dbReference type="iPTMnet" id="P41816"/>
<dbReference type="PaxDb" id="4932-YPL171C"/>
<dbReference type="PeptideAtlas" id="P41816"/>
<dbReference type="EnsemblFungi" id="YPL171C_mRNA">
    <property type="protein sequence ID" value="YPL171C"/>
    <property type="gene ID" value="YPL171C"/>
</dbReference>
<dbReference type="GeneID" id="855932"/>
<dbReference type="KEGG" id="sce:YPL171C"/>
<dbReference type="AGR" id="SGD:S000006092"/>
<dbReference type="SGD" id="S000006092">
    <property type="gene designation" value="OYE3"/>
</dbReference>
<dbReference type="VEuPathDB" id="FungiDB:YPL171C"/>
<dbReference type="eggNOG" id="KOG0134">
    <property type="taxonomic scope" value="Eukaryota"/>
</dbReference>
<dbReference type="GeneTree" id="ENSGT00940000176560"/>
<dbReference type="HOGENOM" id="CLU_012153_0_0_1"/>
<dbReference type="InParanoid" id="P41816"/>
<dbReference type="OMA" id="FQPMKIG"/>
<dbReference type="OrthoDB" id="276546at2759"/>
<dbReference type="BioCyc" id="YEAST:YPL171C-MONOMER"/>
<dbReference type="BioGRID-ORCS" id="855932">
    <property type="hits" value="2 hits in 10 CRISPR screens"/>
</dbReference>
<dbReference type="PRO" id="PR:P41816"/>
<dbReference type="Proteomes" id="UP000002311">
    <property type="component" value="Chromosome XVI"/>
</dbReference>
<dbReference type="RNAct" id="P41816">
    <property type="molecule type" value="protein"/>
</dbReference>
<dbReference type="GO" id="GO:0010181">
    <property type="term" value="F:FMN binding"/>
    <property type="evidence" value="ECO:0007669"/>
    <property type="project" value="InterPro"/>
</dbReference>
<dbReference type="GO" id="GO:0003959">
    <property type="term" value="F:NADPH dehydrogenase activity"/>
    <property type="evidence" value="ECO:0000314"/>
    <property type="project" value="SGD"/>
</dbReference>
<dbReference type="GO" id="GO:0006915">
    <property type="term" value="P:apoptotic process"/>
    <property type="evidence" value="ECO:0000315"/>
    <property type="project" value="SGD"/>
</dbReference>
<dbReference type="CDD" id="cd02933">
    <property type="entry name" value="OYE_like_FMN"/>
    <property type="match status" value="1"/>
</dbReference>
<dbReference type="FunFam" id="3.20.20.70:FF:000138">
    <property type="entry name" value="NADPH dehydrogenase 1"/>
    <property type="match status" value="1"/>
</dbReference>
<dbReference type="Gene3D" id="3.20.20.70">
    <property type="entry name" value="Aldolase class I"/>
    <property type="match status" value="1"/>
</dbReference>
<dbReference type="InterPro" id="IPR013785">
    <property type="entry name" value="Aldolase_TIM"/>
</dbReference>
<dbReference type="InterPro" id="IPR001155">
    <property type="entry name" value="OxRdtase_FMN_N"/>
</dbReference>
<dbReference type="InterPro" id="IPR045247">
    <property type="entry name" value="Oye-like"/>
</dbReference>
<dbReference type="PANTHER" id="PTHR22893">
    <property type="entry name" value="NADH OXIDOREDUCTASE-RELATED"/>
    <property type="match status" value="1"/>
</dbReference>
<dbReference type="PANTHER" id="PTHR22893:SF91">
    <property type="entry name" value="NADPH DEHYDROGENASE 2-RELATED"/>
    <property type="match status" value="1"/>
</dbReference>
<dbReference type="Pfam" id="PF00724">
    <property type="entry name" value="Oxidored_FMN"/>
    <property type="match status" value="1"/>
</dbReference>
<dbReference type="SUPFAM" id="SSF51395">
    <property type="entry name" value="FMN-linked oxidoreductases"/>
    <property type="match status" value="1"/>
</dbReference>
<accession>P41816</accession>
<accession>D6W3J7</accession>
<accession>E9P937</accession>
<sequence>MPFVKGFEPISLRDTNLFEPIKIGNTQLAHRAVMPPLTRMRATHPGNIPNKEWAAVYYGQRAQRPGTMIITEGTFISPQAGGYDNAPGIWSDEQVAEWKNIFLAIHDCQSFAWVQLWSLGWASFPDVLARDGLRYDCASDRVYMNATLQEKAKDANNLEHSLTKDDIKQYIKDYIHAAKNSIAAGADGVEIHSANGYLLNQFLDPHSNKRTDEYGGTIENRARFTLEVVDALIETIGPERVGLRLSPYGTFNSMSGGAEPGIIAQYSYVLGELEKRAKAGKRLAFVHLVEPRVTDPSLVEGEGEYSEGTNDFAYSIWKGPIIRAGNYALHPEVVREQVKDPRTLIGYGRFFISNPDLVYRLEEGLPLNKYDRSTFYTMSAEGYTDYPTYEEAVDLGWNKN</sequence>
<protein>
    <recommendedName>
        <fullName evidence="9">NADPH dehydrogenase 3</fullName>
        <ecNumber evidence="3">1.6.99.1</ecNumber>
    </recommendedName>
    <alternativeName>
        <fullName evidence="7">Old yellow enzyme 3</fullName>
    </alternativeName>
</protein>
<feature type="initiator methionine" description="Removed" evidence="4">
    <location>
        <position position="1"/>
    </location>
</feature>
<feature type="chain" id="PRO_0000194475" description="NADPH dehydrogenase 3">
    <location>
        <begin position="2"/>
        <end position="400"/>
    </location>
</feature>
<feature type="active site" description="Proton donor" evidence="1">
    <location>
        <position position="197"/>
    </location>
</feature>
<feature type="binding site" evidence="5 6">
    <location>
        <position position="38"/>
    </location>
    <ligand>
        <name>FMN</name>
        <dbReference type="ChEBI" id="CHEBI:58210"/>
    </ligand>
</feature>
<feature type="binding site" evidence="5 6">
    <location>
        <position position="115"/>
    </location>
    <ligand>
        <name>FMN</name>
        <dbReference type="ChEBI" id="CHEBI:58210"/>
    </ligand>
</feature>
<feature type="binding site" evidence="6">
    <location>
        <position position="192"/>
    </location>
    <ligand>
        <name>substrate</name>
    </ligand>
</feature>
<feature type="binding site" evidence="6">
    <location>
        <position position="195"/>
    </location>
    <ligand>
        <name>substrate</name>
    </ligand>
</feature>
<feature type="binding site" evidence="5 6">
    <location>
        <position position="244"/>
    </location>
    <ligand>
        <name>FMN</name>
        <dbReference type="ChEBI" id="CHEBI:58210"/>
    </ligand>
</feature>
<feature type="binding site" evidence="5 6">
    <location>
        <position position="349"/>
    </location>
    <ligand>
        <name>FMN</name>
        <dbReference type="ChEBI" id="CHEBI:58210"/>
    </ligand>
</feature>
<feature type="binding site" evidence="6">
    <location>
        <position position="376"/>
    </location>
    <ligand>
        <name>substrate</name>
    </ligand>
</feature>
<feature type="sequence conflict" description="In Ref. 4; AAT93245." evidence="8" ref="4">
    <original>P</original>
    <variation>S</variation>
    <location>
        <position position="78"/>
    </location>
</feature>
<feature type="helix" evidence="13">
    <location>
        <begin position="16"/>
        <end position="18"/>
    </location>
</feature>
<feature type="strand" evidence="13">
    <location>
        <begin position="21"/>
        <end position="23"/>
    </location>
</feature>
<feature type="strand" evidence="13">
    <location>
        <begin position="26"/>
        <end position="30"/>
    </location>
</feature>
<feature type="strand" evidence="13">
    <location>
        <begin position="32"/>
        <end position="34"/>
    </location>
</feature>
<feature type="turn" evidence="13">
    <location>
        <begin position="44"/>
        <end position="47"/>
    </location>
</feature>
<feature type="turn" evidence="13">
    <location>
        <begin position="51"/>
        <end position="53"/>
    </location>
</feature>
<feature type="helix" evidence="13">
    <location>
        <begin position="54"/>
        <end position="61"/>
    </location>
</feature>
<feature type="strand" evidence="13">
    <location>
        <begin position="68"/>
        <end position="70"/>
    </location>
</feature>
<feature type="strand" evidence="13">
    <location>
        <begin position="74"/>
        <end position="77"/>
    </location>
</feature>
<feature type="helix" evidence="13">
    <location>
        <begin position="78"/>
        <end position="80"/>
    </location>
</feature>
<feature type="helix" evidence="13">
    <location>
        <begin position="92"/>
        <end position="107"/>
    </location>
</feature>
<feature type="strand" evidence="13">
    <location>
        <begin position="111"/>
        <end position="117"/>
    </location>
</feature>
<feature type="helix" evidence="13">
    <location>
        <begin position="120"/>
        <end position="122"/>
    </location>
</feature>
<feature type="helix" evidence="13">
    <location>
        <begin position="125"/>
        <end position="130"/>
    </location>
</feature>
<feature type="strand" evidence="13">
    <location>
        <begin position="135"/>
        <end position="138"/>
    </location>
</feature>
<feature type="helix" evidence="13">
    <location>
        <begin position="146"/>
        <end position="154"/>
    </location>
</feature>
<feature type="strand" evidence="13">
    <location>
        <begin position="159"/>
        <end position="161"/>
    </location>
</feature>
<feature type="helix" evidence="13">
    <location>
        <begin position="164"/>
        <end position="183"/>
    </location>
</feature>
<feature type="strand" evidence="13">
    <location>
        <begin position="187"/>
        <end position="192"/>
    </location>
</feature>
<feature type="helix" evidence="13">
    <location>
        <begin position="198"/>
        <end position="203"/>
    </location>
</feature>
<feature type="turn" evidence="13">
    <location>
        <begin position="205"/>
        <end position="207"/>
    </location>
</feature>
<feature type="strand" evidence="13">
    <location>
        <begin position="215"/>
        <end position="217"/>
    </location>
</feature>
<feature type="helix" evidence="13">
    <location>
        <begin position="218"/>
        <end position="221"/>
    </location>
</feature>
<feature type="helix" evidence="13">
    <location>
        <begin position="223"/>
        <end position="236"/>
    </location>
</feature>
<feature type="helix" evidence="13">
    <location>
        <begin position="238"/>
        <end position="240"/>
    </location>
</feature>
<feature type="strand" evidence="13">
    <location>
        <begin position="241"/>
        <end position="245"/>
    </location>
</feature>
<feature type="turn" evidence="13">
    <location>
        <begin position="251"/>
        <end position="253"/>
    </location>
</feature>
<feature type="helix" evidence="13">
    <location>
        <begin position="256"/>
        <end position="258"/>
    </location>
</feature>
<feature type="helix" evidence="13">
    <location>
        <begin position="262"/>
        <end position="278"/>
    </location>
</feature>
<feature type="strand" evidence="13">
    <location>
        <begin position="284"/>
        <end position="289"/>
    </location>
</feature>
<feature type="helix" evidence="13">
    <location>
        <begin position="311"/>
        <end position="316"/>
    </location>
</feature>
<feature type="strand" evidence="13">
    <location>
        <begin position="321"/>
        <end position="326"/>
    </location>
</feature>
<feature type="helix" evidence="13">
    <location>
        <begin position="331"/>
        <end position="337"/>
    </location>
</feature>
<feature type="strand" evidence="13">
    <location>
        <begin position="343"/>
        <end position="346"/>
    </location>
</feature>
<feature type="helix" evidence="13">
    <location>
        <begin position="349"/>
        <end position="353"/>
    </location>
</feature>
<feature type="helix" evidence="13">
    <location>
        <begin position="357"/>
        <end position="363"/>
    </location>
</feature>
<feature type="helix" evidence="13">
    <location>
        <begin position="372"/>
        <end position="374"/>
    </location>
</feature>
<feature type="strand" evidence="13">
    <location>
        <begin position="375"/>
        <end position="380"/>
    </location>
</feature>
<feature type="turn" evidence="13">
    <location>
        <begin position="381"/>
        <end position="383"/>
    </location>
</feature>
<feature type="helix" evidence="13">
    <location>
        <begin position="389"/>
        <end position="394"/>
    </location>
</feature>
<name>OYE3_YEAST</name>
<organism>
    <name type="scientific">Saccharomyces cerevisiae (strain ATCC 204508 / S288c)</name>
    <name type="common">Baker's yeast</name>
    <dbReference type="NCBI Taxonomy" id="559292"/>
    <lineage>
        <taxon>Eukaryota</taxon>
        <taxon>Fungi</taxon>
        <taxon>Dikarya</taxon>
        <taxon>Ascomycota</taxon>
        <taxon>Saccharomycotina</taxon>
        <taxon>Saccharomycetes</taxon>
        <taxon>Saccharomycetales</taxon>
        <taxon>Saccharomycetaceae</taxon>
        <taxon>Saccharomyces</taxon>
    </lineage>
</organism>
<gene>
    <name evidence="7" type="primary">OYE3</name>
    <name type="ordered locus">YPL171C</name>
    <name type="ORF">P2291</name>
</gene>
<keyword id="KW-0002">3D-structure</keyword>
<keyword id="KW-0903">Direct protein sequencing</keyword>
<keyword id="KW-0285">Flavoprotein</keyword>
<keyword id="KW-0288">FMN</keyword>
<keyword id="KW-0521">NADP</keyword>
<keyword id="KW-0560">Oxidoreductase</keyword>
<keyword id="KW-1185">Reference proteome</keyword>